<reference key="1">
    <citation type="submission" date="2009-01" db="EMBL/GenBank/DDBJ databases">
        <title>Complete sequence of Geobacter sp. FRC-32.</title>
        <authorList>
            <consortium name="US DOE Joint Genome Institute"/>
            <person name="Lucas S."/>
            <person name="Copeland A."/>
            <person name="Lapidus A."/>
            <person name="Glavina del Rio T."/>
            <person name="Dalin E."/>
            <person name="Tice H."/>
            <person name="Bruce D."/>
            <person name="Goodwin L."/>
            <person name="Pitluck S."/>
            <person name="Saunders E."/>
            <person name="Brettin T."/>
            <person name="Detter J.C."/>
            <person name="Han C."/>
            <person name="Larimer F."/>
            <person name="Land M."/>
            <person name="Hauser L."/>
            <person name="Kyrpides N."/>
            <person name="Ovchinnikova G."/>
            <person name="Kostka J."/>
            <person name="Richardson P."/>
        </authorList>
    </citation>
    <scope>NUCLEOTIDE SEQUENCE [LARGE SCALE GENOMIC DNA]</scope>
    <source>
        <strain>DSM 22248 / JCM 15807 / FRC-32</strain>
    </source>
</reference>
<feature type="chain" id="PRO_1000149845" description="tRNA pseudouridine synthase D">
    <location>
        <begin position="1"/>
        <end position="397"/>
    </location>
</feature>
<feature type="domain" description="TRUD" evidence="1">
    <location>
        <begin position="151"/>
        <end position="361"/>
    </location>
</feature>
<feature type="active site" description="Nucleophile" evidence="1">
    <location>
        <position position="76"/>
    </location>
</feature>
<sequence>MHPYLTGNIPGTGGIFKETPEDFLVTEIPIYTPCGEGEHIYAEIEKRGITTLEAIRRLAKALGIGERDVGYAGMKDAKGITRQTISLPRVAPEQVLGLELPGIKVLSAVPHRNKLKVGHLRGNRFRIRIGGVGADAATIAIAVLDILEKRGVPNFFGEQRYGAQGNSHLIGGAILRNDYRGAVDALIGEPDKVTDERWRRAIEAFKAGDLAKSLETFPPHCRTERELLQKLVKQPEAHEKAFRAVHPRLRKLYLSAFQADLFDRVVQQRMDSLDQVVHGDVAFKHDNGACFLVTDAAAEAPRAAAFEISATGPMFGCRMKEPEGETLAMERRLLETEDLTLPSFDLEGGLRMEGERRPLRVPIAEIGVEADGAGLFLEFSLPKGSYATTVLREVMKS</sequence>
<proteinExistence type="inferred from homology"/>
<comment type="function">
    <text evidence="1">Responsible for synthesis of pseudouridine from uracil-13 in transfer RNAs.</text>
</comment>
<comment type="catalytic activity">
    <reaction evidence="1">
        <text>uridine(13) in tRNA = pseudouridine(13) in tRNA</text>
        <dbReference type="Rhea" id="RHEA:42540"/>
        <dbReference type="Rhea" id="RHEA-COMP:10105"/>
        <dbReference type="Rhea" id="RHEA-COMP:10106"/>
        <dbReference type="ChEBI" id="CHEBI:65314"/>
        <dbReference type="ChEBI" id="CHEBI:65315"/>
        <dbReference type="EC" id="5.4.99.27"/>
    </reaction>
</comment>
<comment type="similarity">
    <text evidence="1">Belongs to the pseudouridine synthase TruD family.</text>
</comment>
<protein>
    <recommendedName>
        <fullName evidence="1">tRNA pseudouridine synthase D</fullName>
        <ecNumber evidence="1">5.4.99.27</ecNumber>
    </recommendedName>
    <alternativeName>
        <fullName evidence="1">tRNA pseudouridine(13) synthase</fullName>
    </alternativeName>
    <alternativeName>
        <fullName evidence="1">tRNA pseudouridylate synthase D</fullName>
    </alternativeName>
    <alternativeName>
        <fullName evidence="1">tRNA-uridine isomerase D</fullName>
    </alternativeName>
</protein>
<organism>
    <name type="scientific">Geotalea daltonii (strain DSM 22248 / JCM 15807 / FRC-32)</name>
    <name type="common">Geobacter daltonii</name>
    <dbReference type="NCBI Taxonomy" id="316067"/>
    <lineage>
        <taxon>Bacteria</taxon>
        <taxon>Pseudomonadati</taxon>
        <taxon>Thermodesulfobacteriota</taxon>
        <taxon>Desulfuromonadia</taxon>
        <taxon>Geobacterales</taxon>
        <taxon>Geobacteraceae</taxon>
        <taxon>Geotalea</taxon>
    </lineage>
</organism>
<gene>
    <name evidence="1" type="primary">truD</name>
    <name type="ordered locus">Geob_1667</name>
</gene>
<evidence type="ECO:0000255" key="1">
    <source>
        <dbReference type="HAMAP-Rule" id="MF_01082"/>
    </source>
</evidence>
<accession>B9M644</accession>
<dbReference type="EC" id="5.4.99.27" evidence="1"/>
<dbReference type="EMBL" id="CP001390">
    <property type="protein sequence ID" value="ACM20025.1"/>
    <property type="molecule type" value="Genomic_DNA"/>
</dbReference>
<dbReference type="SMR" id="B9M644"/>
<dbReference type="STRING" id="316067.Geob_1667"/>
<dbReference type="KEGG" id="geo:Geob_1667"/>
<dbReference type="eggNOG" id="COG0585">
    <property type="taxonomic scope" value="Bacteria"/>
</dbReference>
<dbReference type="HOGENOM" id="CLU_005281_4_0_7"/>
<dbReference type="OrthoDB" id="1550679at2"/>
<dbReference type="Proteomes" id="UP000007721">
    <property type="component" value="Chromosome"/>
</dbReference>
<dbReference type="GO" id="GO:0005829">
    <property type="term" value="C:cytosol"/>
    <property type="evidence" value="ECO:0007669"/>
    <property type="project" value="TreeGrafter"/>
</dbReference>
<dbReference type="GO" id="GO:0003723">
    <property type="term" value="F:RNA binding"/>
    <property type="evidence" value="ECO:0007669"/>
    <property type="project" value="InterPro"/>
</dbReference>
<dbReference type="GO" id="GO:0160150">
    <property type="term" value="F:tRNA pseudouridine(13) synthase activity"/>
    <property type="evidence" value="ECO:0007669"/>
    <property type="project" value="UniProtKB-EC"/>
</dbReference>
<dbReference type="GO" id="GO:0031119">
    <property type="term" value="P:tRNA pseudouridine synthesis"/>
    <property type="evidence" value="ECO:0007669"/>
    <property type="project" value="UniProtKB-UniRule"/>
</dbReference>
<dbReference type="Gene3D" id="1.10.1510.30">
    <property type="match status" value="1"/>
</dbReference>
<dbReference type="Gene3D" id="3.30.70.3160">
    <property type="match status" value="1"/>
</dbReference>
<dbReference type="Gene3D" id="3.30.2350.20">
    <property type="entry name" value="TruD, catalytic domain"/>
    <property type="match status" value="1"/>
</dbReference>
<dbReference type="HAMAP" id="MF_01082">
    <property type="entry name" value="TruD"/>
    <property type="match status" value="1"/>
</dbReference>
<dbReference type="InterPro" id="IPR020103">
    <property type="entry name" value="PsdUridine_synth_cat_dom_sf"/>
</dbReference>
<dbReference type="InterPro" id="IPR001656">
    <property type="entry name" value="PsdUridine_synth_TruD"/>
</dbReference>
<dbReference type="InterPro" id="IPR020119">
    <property type="entry name" value="PsdUridine_synth_TruD_CS"/>
</dbReference>
<dbReference type="InterPro" id="IPR011760">
    <property type="entry name" value="PsdUridine_synth_TruD_insert"/>
</dbReference>
<dbReference type="InterPro" id="IPR042214">
    <property type="entry name" value="TruD_catalytic"/>
</dbReference>
<dbReference type="InterPro" id="IPR050170">
    <property type="entry name" value="TruD_pseudoU_synthase"/>
</dbReference>
<dbReference type="NCBIfam" id="TIGR00094">
    <property type="entry name" value="tRNA_TruD_broad"/>
    <property type="match status" value="1"/>
</dbReference>
<dbReference type="PANTHER" id="PTHR47811">
    <property type="entry name" value="TRNA PSEUDOURIDINE SYNTHASE D"/>
    <property type="match status" value="1"/>
</dbReference>
<dbReference type="PANTHER" id="PTHR47811:SF1">
    <property type="entry name" value="TRNA PSEUDOURIDINE SYNTHASE D"/>
    <property type="match status" value="1"/>
</dbReference>
<dbReference type="Pfam" id="PF01142">
    <property type="entry name" value="TruD"/>
    <property type="match status" value="1"/>
</dbReference>
<dbReference type="PIRSF" id="PIRSF037016">
    <property type="entry name" value="Pseudouridin_synth_euk_prd"/>
    <property type="match status" value="1"/>
</dbReference>
<dbReference type="SUPFAM" id="SSF55120">
    <property type="entry name" value="Pseudouridine synthase"/>
    <property type="match status" value="1"/>
</dbReference>
<dbReference type="PROSITE" id="PS50984">
    <property type="entry name" value="TRUD"/>
    <property type="match status" value="1"/>
</dbReference>
<dbReference type="PROSITE" id="PS01268">
    <property type="entry name" value="UPF0024"/>
    <property type="match status" value="1"/>
</dbReference>
<keyword id="KW-0413">Isomerase</keyword>
<keyword id="KW-1185">Reference proteome</keyword>
<keyword id="KW-0819">tRNA processing</keyword>
<name>TRUD_GEODF</name>